<dbReference type="EMBL" id="CP000253">
    <property type="protein sequence ID" value="ABD29567.1"/>
    <property type="status" value="ALT_INIT"/>
    <property type="molecule type" value="Genomic_DNA"/>
</dbReference>
<dbReference type="RefSeq" id="YP_498991.1">
    <property type="nucleotide sequence ID" value="NC_007795.1"/>
</dbReference>
<dbReference type="SMR" id="Q2G0W9"/>
<dbReference type="STRING" id="93061.SAOUHSC_00405"/>
<dbReference type="PaxDb" id="1280-SAXN108_0495"/>
<dbReference type="GeneID" id="3920563"/>
<dbReference type="KEGG" id="sao:SAOUHSC_00405"/>
<dbReference type="PATRIC" id="fig|93061.5.peg.372"/>
<dbReference type="eggNOG" id="ENOG5033UD8">
    <property type="taxonomic scope" value="Bacteria"/>
</dbReference>
<dbReference type="HOGENOM" id="CLU_071589_0_1_9"/>
<dbReference type="OrthoDB" id="2189886at2"/>
<dbReference type="Proteomes" id="UP000008816">
    <property type="component" value="Chromosome"/>
</dbReference>
<dbReference type="GO" id="GO:0005886">
    <property type="term" value="C:plasma membrane"/>
    <property type="evidence" value="ECO:0007669"/>
    <property type="project" value="UniProtKB-SubCell"/>
</dbReference>
<dbReference type="Gene3D" id="2.50.20.40">
    <property type="match status" value="1"/>
</dbReference>
<dbReference type="InterPro" id="IPR007595">
    <property type="entry name" value="Csa"/>
</dbReference>
<dbReference type="InterPro" id="IPR038641">
    <property type="entry name" value="Csa_sf"/>
</dbReference>
<dbReference type="NCBIfam" id="TIGR01742">
    <property type="entry name" value="SA_tandem_lipo"/>
    <property type="match status" value="1"/>
</dbReference>
<dbReference type="Pfam" id="PF04507">
    <property type="entry name" value="DUF576"/>
    <property type="match status" value="1"/>
</dbReference>
<dbReference type="PROSITE" id="PS51257">
    <property type="entry name" value="PROKAR_LIPOPROTEIN"/>
    <property type="match status" value="1"/>
</dbReference>
<comment type="subcellular location">
    <subcellularLocation>
        <location evidence="1">Cell membrane</location>
        <topology evidence="1">Lipid-anchor</topology>
    </subcellularLocation>
</comment>
<comment type="similarity">
    <text evidence="2">Belongs to the staphylococcal tandem lipoprotein family.</text>
</comment>
<comment type="sequence caution" evidence="2">
    <conflict type="erroneous initiation">
        <sequence resource="EMBL-CDS" id="ABD29567"/>
    </conflict>
</comment>
<organism>
    <name type="scientific">Staphylococcus aureus (strain NCTC 8325 / PS 47)</name>
    <dbReference type="NCBI Taxonomy" id="93061"/>
    <lineage>
        <taxon>Bacteria</taxon>
        <taxon>Bacillati</taxon>
        <taxon>Bacillota</taxon>
        <taxon>Bacilli</taxon>
        <taxon>Bacillales</taxon>
        <taxon>Staphylococcaceae</taxon>
        <taxon>Staphylococcus</taxon>
    </lineage>
</organism>
<feature type="signal peptide" evidence="1">
    <location>
        <begin position="1"/>
        <end position="22"/>
    </location>
</feature>
<feature type="chain" id="PRO_0000282093" description="Uncharacterized lipoprotein SAOUHSC_00405">
    <location>
        <begin position="23"/>
        <end position="270"/>
    </location>
</feature>
<feature type="lipid moiety-binding region" description="N-palmitoyl cysteine" evidence="1">
    <location>
        <position position="23"/>
    </location>
</feature>
<feature type="lipid moiety-binding region" description="S-diacylglycerol cysteine" evidence="1">
    <location>
        <position position="23"/>
    </location>
</feature>
<sequence>MEYIKKIALYMSVLLLIIFIGGCGNMKDEQKKEEQTNKTDSKEEQIKKSFAKTLDMYPIKNLEDLYDKEGYRDGEFKKGDKGTWTILTGFSKSNKPGVLDDEGMVLYLNRNTKKATGYYFVNKVYDDISKNHNEKKYRVELKNNKIVLLDNVEDKKLKQKIENFKFFSQYADFKDLKNYQDGNITTNENVPSYEAQYKMNNSDKNVKKLREIYPITTNNSPNLKLYIDGDIKGSSVGYKKIEYKFSKDKGQETTLRDYLNFGPSEGENVE</sequence>
<keyword id="KW-1003">Cell membrane</keyword>
<keyword id="KW-0449">Lipoprotein</keyword>
<keyword id="KW-0472">Membrane</keyword>
<keyword id="KW-0564">Palmitate</keyword>
<keyword id="KW-1185">Reference proteome</keyword>
<keyword id="KW-0732">Signal</keyword>
<proteinExistence type="inferred from homology"/>
<accession>Q2G0W9</accession>
<reference key="1">
    <citation type="book" date="2006" name="Gram positive pathogens, 2nd edition">
        <title>The Staphylococcus aureus NCTC 8325 genome.</title>
        <editorList>
            <person name="Fischetti V."/>
            <person name="Novick R."/>
            <person name="Ferretti J."/>
            <person name="Portnoy D."/>
            <person name="Rood J."/>
        </editorList>
        <authorList>
            <person name="Gillaspy A.F."/>
            <person name="Worrell V."/>
            <person name="Orvis J."/>
            <person name="Roe B.A."/>
            <person name="Dyer D.W."/>
            <person name="Iandolo J.J."/>
        </authorList>
    </citation>
    <scope>NUCLEOTIDE SEQUENCE [LARGE SCALE GENOMIC DNA]</scope>
    <source>
        <strain>NCTC 8325 / PS 47</strain>
    </source>
</reference>
<evidence type="ECO:0000255" key="1">
    <source>
        <dbReference type="PROSITE-ProRule" id="PRU00303"/>
    </source>
</evidence>
<evidence type="ECO:0000305" key="2"/>
<protein>
    <recommendedName>
        <fullName>Uncharacterized lipoprotein SAOUHSC_00405</fullName>
    </recommendedName>
</protein>
<name>Y405_STAA8</name>
<gene>
    <name type="ordered locus">SAOUHSC_00405</name>
</gene>